<gene>
    <name evidence="1" type="primary">rplP</name>
    <name type="ordered locus">DvMF_0086</name>
</gene>
<accession>B8DNA3</accession>
<protein>
    <recommendedName>
        <fullName evidence="1">Large ribosomal subunit protein uL16</fullName>
    </recommendedName>
    <alternativeName>
        <fullName evidence="2">50S ribosomal protein L16</fullName>
    </alternativeName>
</protein>
<proteinExistence type="inferred from homology"/>
<feature type="chain" id="PRO_1000142962" description="Large ribosomal subunit protein uL16">
    <location>
        <begin position="1"/>
        <end position="137"/>
    </location>
</feature>
<evidence type="ECO:0000255" key="1">
    <source>
        <dbReference type="HAMAP-Rule" id="MF_01342"/>
    </source>
</evidence>
<evidence type="ECO:0000305" key="2"/>
<dbReference type="EMBL" id="CP001197">
    <property type="protein sequence ID" value="ACL07047.1"/>
    <property type="molecule type" value="Genomic_DNA"/>
</dbReference>
<dbReference type="SMR" id="B8DNA3"/>
<dbReference type="STRING" id="883.DvMF_0086"/>
<dbReference type="KEGG" id="dvm:DvMF_0086"/>
<dbReference type="eggNOG" id="COG0197">
    <property type="taxonomic scope" value="Bacteria"/>
</dbReference>
<dbReference type="HOGENOM" id="CLU_078858_2_1_7"/>
<dbReference type="OrthoDB" id="9802589at2"/>
<dbReference type="GO" id="GO:0022625">
    <property type="term" value="C:cytosolic large ribosomal subunit"/>
    <property type="evidence" value="ECO:0007669"/>
    <property type="project" value="TreeGrafter"/>
</dbReference>
<dbReference type="GO" id="GO:0019843">
    <property type="term" value="F:rRNA binding"/>
    <property type="evidence" value="ECO:0007669"/>
    <property type="project" value="UniProtKB-UniRule"/>
</dbReference>
<dbReference type="GO" id="GO:0003735">
    <property type="term" value="F:structural constituent of ribosome"/>
    <property type="evidence" value="ECO:0007669"/>
    <property type="project" value="InterPro"/>
</dbReference>
<dbReference type="GO" id="GO:0000049">
    <property type="term" value="F:tRNA binding"/>
    <property type="evidence" value="ECO:0007669"/>
    <property type="project" value="UniProtKB-KW"/>
</dbReference>
<dbReference type="GO" id="GO:0006412">
    <property type="term" value="P:translation"/>
    <property type="evidence" value="ECO:0007669"/>
    <property type="project" value="UniProtKB-UniRule"/>
</dbReference>
<dbReference type="CDD" id="cd01433">
    <property type="entry name" value="Ribosomal_L16_L10e"/>
    <property type="match status" value="1"/>
</dbReference>
<dbReference type="FunFam" id="3.90.1170.10:FF:000001">
    <property type="entry name" value="50S ribosomal protein L16"/>
    <property type="match status" value="1"/>
</dbReference>
<dbReference type="Gene3D" id="3.90.1170.10">
    <property type="entry name" value="Ribosomal protein L10e/L16"/>
    <property type="match status" value="1"/>
</dbReference>
<dbReference type="HAMAP" id="MF_01342">
    <property type="entry name" value="Ribosomal_uL16"/>
    <property type="match status" value="1"/>
</dbReference>
<dbReference type="InterPro" id="IPR047873">
    <property type="entry name" value="Ribosomal_uL16"/>
</dbReference>
<dbReference type="InterPro" id="IPR000114">
    <property type="entry name" value="Ribosomal_uL16_bact-type"/>
</dbReference>
<dbReference type="InterPro" id="IPR020798">
    <property type="entry name" value="Ribosomal_uL16_CS"/>
</dbReference>
<dbReference type="InterPro" id="IPR016180">
    <property type="entry name" value="Ribosomal_uL16_dom"/>
</dbReference>
<dbReference type="InterPro" id="IPR036920">
    <property type="entry name" value="Ribosomal_uL16_sf"/>
</dbReference>
<dbReference type="NCBIfam" id="TIGR01164">
    <property type="entry name" value="rplP_bact"/>
    <property type="match status" value="1"/>
</dbReference>
<dbReference type="PANTHER" id="PTHR12220">
    <property type="entry name" value="50S/60S RIBOSOMAL PROTEIN L16"/>
    <property type="match status" value="1"/>
</dbReference>
<dbReference type="PANTHER" id="PTHR12220:SF13">
    <property type="entry name" value="LARGE RIBOSOMAL SUBUNIT PROTEIN UL16M"/>
    <property type="match status" value="1"/>
</dbReference>
<dbReference type="Pfam" id="PF00252">
    <property type="entry name" value="Ribosomal_L16"/>
    <property type="match status" value="1"/>
</dbReference>
<dbReference type="PRINTS" id="PR00060">
    <property type="entry name" value="RIBOSOMALL16"/>
</dbReference>
<dbReference type="SUPFAM" id="SSF54686">
    <property type="entry name" value="Ribosomal protein L16p/L10e"/>
    <property type="match status" value="1"/>
</dbReference>
<dbReference type="PROSITE" id="PS00586">
    <property type="entry name" value="RIBOSOMAL_L16_1"/>
    <property type="match status" value="1"/>
</dbReference>
<comment type="function">
    <text evidence="1">Binds 23S rRNA and is also seen to make contacts with the A and possibly P site tRNAs.</text>
</comment>
<comment type="subunit">
    <text evidence="1">Part of the 50S ribosomal subunit.</text>
</comment>
<comment type="similarity">
    <text evidence="1">Belongs to the universal ribosomal protein uL16 family.</text>
</comment>
<sequence>MLSPRKVKFRKWQKGRLRGMATRGATVSFGDIGLKAVEHGKLSSQQIEAARIAMMRHIKRGGKVWIRIFPDHPVTAKPLETRQGSGKGAPVGWCAPVKPGRVLYEIKGVSLELAKEALTRAAHKLPIKTTIVVREGL</sequence>
<keyword id="KW-0687">Ribonucleoprotein</keyword>
<keyword id="KW-0689">Ribosomal protein</keyword>
<keyword id="KW-0694">RNA-binding</keyword>
<keyword id="KW-0699">rRNA-binding</keyword>
<keyword id="KW-0820">tRNA-binding</keyword>
<name>RL16_NITV9</name>
<reference key="1">
    <citation type="submission" date="2008-10" db="EMBL/GenBank/DDBJ databases">
        <title>Complete sequence of Desulfovibrio vulgaris str. 'Miyazaki F'.</title>
        <authorList>
            <person name="Lucas S."/>
            <person name="Copeland A."/>
            <person name="Lapidus A."/>
            <person name="Glavina del Rio T."/>
            <person name="Dalin E."/>
            <person name="Tice H."/>
            <person name="Bruce D."/>
            <person name="Goodwin L."/>
            <person name="Pitluck S."/>
            <person name="Sims D."/>
            <person name="Brettin T."/>
            <person name="Detter J.C."/>
            <person name="Han C."/>
            <person name="Larimer F."/>
            <person name="Land M."/>
            <person name="Hauser L."/>
            <person name="Kyrpides N."/>
            <person name="Mikhailova N."/>
            <person name="Hazen T.C."/>
            <person name="Richardson P."/>
        </authorList>
    </citation>
    <scope>NUCLEOTIDE SEQUENCE [LARGE SCALE GENOMIC DNA]</scope>
    <source>
        <strain>DSM 19637 / Miyazaki F</strain>
    </source>
</reference>
<organism>
    <name type="scientific">Nitratidesulfovibrio vulgaris (strain DSM 19637 / Miyazaki F)</name>
    <name type="common">Desulfovibrio vulgaris</name>
    <dbReference type="NCBI Taxonomy" id="883"/>
    <lineage>
        <taxon>Bacteria</taxon>
        <taxon>Pseudomonadati</taxon>
        <taxon>Thermodesulfobacteriota</taxon>
        <taxon>Desulfovibrionia</taxon>
        <taxon>Desulfovibrionales</taxon>
        <taxon>Desulfovibrionaceae</taxon>
        <taxon>Nitratidesulfovibrio</taxon>
    </lineage>
</organism>